<evidence type="ECO:0000255" key="1">
    <source>
        <dbReference type="HAMAP-Rule" id="MF_00315"/>
    </source>
</evidence>
<organism>
    <name type="scientific">Francisella tularensis subsp. holarctica (strain FTNF002-00 / FTA)</name>
    <dbReference type="NCBI Taxonomy" id="458234"/>
    <lineage>
        <taxon>Bacteria</taxon>
        <taxon>Pseudomonadati</taxon>
        <taxon>Pseudomonadota</taxon>
        <taxon>Gammaproteobacteria</taxon>
        <taxon>Thiotrichales</taxon>
        <taxon>Francisellaceae</taxon>
        <taxon>Francisella</taxon>
    </lineage>
</organism>
<proteinExistence type="inferred from homology"/>
<gene>
    <name evidence="1" type="primary">dxs</name>
    <name type="ordered locus">FTA_1131</name>
</gene>
<name>DXS_FRATF</name>
<feature type="chain" id="PRO_1000019026" description="1-deoxy-D-xylulose-5-phosphate synthase">
    <location>
        <begin position="1"/>
        <end position="615"/>
    </location>
</feature>
<feature type="binding site" evidence="1">
    <location>
        <position position="76"/>
    </location>
    <ligand>
        <name>thiamine diphosphate</name>
        <dbReference type="ChEBI" id="CHEBI:58937"/>
    </ligand>
</feature>
<feature type="binding site" evidence="1">
    <location>
        <begin position="117"/>
        <end position="119"/>
    </location>
    <ligand>
        <name>thiamine diphosphate</name>
        <dbReference type="ChEBI" id="CHEBI:58937"/>
    </ligand>
</feature>
<feature type="binding site" evidence="1">
    <location>
        <position position="148"/>
    </location>
    <ligand>
        <name>Mg(2+)</name>
        <dbReference type="ChEBI" id="CHEBI:18420"/>
    </ligand>
</feature>
<feature type="binding site" evidence="1">
    <location>
        <begin position="149"/>
        <end position="150"/>
    </location>
    <ligand>
        <name>thiamine diphosphate</name>
        <dbReference type="ChEBI" id="CHEBI:58937"/>
    </ligand>
</feature>
<feature type="binding site" evidence="1">
    <location>
        <position position="177"/>
    </location>
    <ligand>
        <name>Mg(2+)</name>
        <dbReference type="ChEBI" id="CHEBI:18420"/>
    </ligand>
</feature>
<feature type="binding site" evidence="1">
    <location>
        <position position="177"/>
    </location>
    <ligand>
        <name>thiamine diphosphate</name>
        <dbReference type="ChEBI" id="CHEBI:58937"/>
    </ligand>
</feature>
<feature type="binding site" evidence="1">
    <location>
        <position position="284"/>
    </location>
    <ligand>
        <name>thiamine diphosphate</name>
        <dbReference type="ChEBI" id="CHEBI:58937"/>
    </ligand>
</feature>
<feature type="binding site" evidence="1">
    <location>
        <position position="365"/>
    </location>
    <ligand>
        <name>thiamine diphosphate</name>
        <dbReference type="ChEBI" id="CHEBI:58937"/>
    </ligand>
</feature>
<dbReference type="EC" id="2.2.1.7" evidence="1"/>
<dbReference type="EMBL" id="CP000803">
    <property type="protein sequence ID" value="ABU61607.1"/>
    <property type="molecule type" value="Genomic_DNA"/>
</dbReference>
<dbReference type="RefSeq" id="WP_003016001.1">
    <property type="nucleotide sequence ID" value="NC_009749.1"/>
</dbReference>
<dbReference type="SMR" id="A7NCA4"/>
<dbReference type="KEGG" id="fta:FTA_1131"/>
<dbReference type="HOGENOM" id="CLU_009227_1_4_6"/>
<dbReference type="UniPathway" id="UPA00064">
    <property type="reaction ID" value="UER00091"/>
</dbReference>
<dbReference type="GO" id="GO:0005829">
    <property type="term" value="C:cytosol"/>
    <property type="evidence" value="ECO:0007669"/>
    <property type="project" value="TreeGrafter"/>
</dbReference>
<dbReference type="GO" id="GO:0008661">
    <property type="term" value="F:1-deoxy-D-xylulose-5-phosphate synthase activity"/>
    <property type="evidence" value="ECO:0007669"/>
    <property type="project" value="UniProtKB-UniRule"/>
</dbReference>
<dbReference type="GO" id="GO:0000287">
    <property type="term" value="F:magnesium ion binding"/>
    <property type="evidence" value="ECO:0007669"/>
    <property type="project" value="UniProtKB-UniRule"/>
</dbReference>
<dbReference type="GO" id="GO:0030976">
    <property type="term" value="F:thiamine pyrophosphate binding"/>
    <property type="evidence" value="ECO:0007669"/>
    <property type="project" value="UniProtKB-UniRule"/>
</dbReference>
<dbReference type="GO" id="GO:0052865">
    <property type="term" value="P:1-deoxy-D-xylulose 5-phosphate biosynthetic process"/>
    <property type="evidence" value="ECO:0007669"/>
    <property type="project" value="UniProtKB-UniPathway"/>
</dbReference>
<dbReference type="GO" id="GO:0019288">
    <property type="term" value="P:isopentenyl diphosphate biosynthetic process, methylerythritol 4-phosphate pathway"/>
    <property type="evidence" value="ECO:0007669"/>
    <property type="project" value="TreeGrafter"/>
</dbReference>
<dbReference type="GO" id="GO:0016114">
    <property type="term" value="P:terpenoid biosynthetic process"/>
    <property type="evidence" value="ECO:0007669"/>
    <property type="project" value="UniProtKB-UniRule"/>
</dbReference>
<dbReference type="GO" id="GO:0009228">
    <property type="term" value="P:thiamine biosynthetic process"/>
    <property type="evidence" value="ECO:0007669"/>
    <property type="project" value="UniProtKB-UniRule"/>
</dbReference>
<dbReference type="CDD" id="cd02007">
    <property type="entry name" value="TPP_DXS"/>
    <property type="match status" value="1"/>
</dbReference>
<dbReference type="CDD" id="cd07033">
    <property type="entry name" value="TPP_PYR_DXS_TK_like"/>
    <property type="match status" value="1"/>
</dbReference>
<dbReference type="FunFam" id="3.40.50.970:FF:000005">
    <property type="entry name" value="1-deoxy-D-xylulose-5-phosphate synthase"/>
    <property type="match status" value="1"/>
</dbReference>
<dbReference type="Gene3D" id="3.40.50.920">
    <property type="match status" value="1"/>
</dbReference>
<dbReference type="Gene3D" id="3.40.50.970">
    <property type="match status" value="2"/>
</dbReference>
<dbReference type="HAMAP" id="MF_00315">
    <property type="entry name" value="DXP_synth"/>
    <property type="match status" value="1"/>
</dbReference>
<dbReference type="InterPro" id="IPR005477">
    <property type="entry name" value="Dxylulose-5-P_synthase"/>
</dbReference>
<dbReference type="InterPro" id="IPR029061">
    <property type="entry name" value="THDP-binding"/>
</dbReference>
<dbReference type="InterPro" id="IPR009014">
    <property type="entry name" value="Transketo_C/PFOR_II"/>
</dbReference>
<dbReference type="InterPro" id="IPR005475">
    <property type="entry name" value="Transketolase-like_Pyr-bd"/>
</dbReference>
<dbReference type="InterPro" id="IPR020826">
    <property type="entry name" value="Transketolase_BS"/>
</dbReference>
<dbReference type="InterPro" id="IPR033248">
    <property type="entry name" value="Transketolase_C"/>
</dbReference>
<dbReference type="InterPro" id="IPR049557">
    <property type="entry name" value="Transketolase_CS"/>
</dbReference>
<dbReference type="NCBIfam" id="TIGR00204">
    <property type="entry name" value="dxs"/>
    <property type="match status" value="1"/>
</dbReference>
<dbReference type="NCBIfam" id="NF003933">
    <property type="entry name" value="PRK05444.2-2"/>
    <property type="match status" value="1"/>
</dbReference>
<dbReference type="PANTHER" id="PTHR43322">
    <property type="entry name" value="1-D-DEOXYXYLULOSE 5-PHOSPHATE SYNTHASE-RELATED"/>
    <property type="match status" value="1"/>
</dbReference>
<dbReference type="PANTHER" id="PTHR43322:SF5">
    <property type="entry name" value="1-DEOXY-D-XYLULOSE-5-PHOSPHATE SYNTHASE, CHLOROPLASTIC"/>
    <property type="match status" value="1"/>
</dbReference>
<dbReference type="Pfam" id="PF13292">
    <property type="entry name" value="DXP_synthase_N"/>
    <property type="match status" value="1"/>
</dbReference>
<dbReference type="Pfam" id="PF02779">
    <property type="entry name" value="Transket_pyr"/>
    <property type="match status" value="1"/>
</dbReference>
<dbReference type="Pfam" id="PF02780">
    <property type="entry name" value="Transketolase_C"/>
    <property type="match status" value="1"/>
</dbReference>
<dbReference type="SMART" id="SM00861">
    <property type="entry name" value="Transket_pyr"/>
    <property type="match status" value="1"/>
</dbReference>
<dbReference type="SUPFAM" id="SSF52518">
    <property type="entry name" value="Thiamin diphosphate-binding fold (THDP-binding)"/>
    <property type="match status" value="2"/>
</dbReference>
<dbReference type="SUPFAM" id="SSF52922">
    <property type="entry name" value="TK C-terminal domain-like"/>
    <property type="match status" value="1"/>
</dbReference>
<dbReference type="PROSITE" id="PS00801">
    <property type="entry name" value="TRANSKETOLASE_1"/>
    <property type="match status" value="1"/>
</dbReference>
<dbReference type="PROSITE" id="PS00802">
    <property type="entry name" value="TRANSKETOLASE_2"/>
    <property type="match status" value="1"/>
</dbReference>
<sequence>MSKYTILDKINTPSDLKLIPESQLKILSAELRAFLVDTLDVSGGHFASSLGATELTVALHYVYNAPYDNIVWDVGHQTYIHKILTGRKDKLVTIKKDGGISGFPKRSESEYDTFGVGHSSTSISAALGMAIADRLQGKSSNTVAVIGDGAITGGMAFEALNHAGGIKEDILVILNDNEMSISDNVGGLSAHFSKIISGGFYNSIREKGKEVLKNIPPIFEFVKKIETQTKGMFVPANFFEDLGFYYVGPIDGHDVTELVKTLRILKDHKGPKLLHVITKKGKGYTKAESDPIKFHHVAPSFHSGENITTKISKPTYSNIFGDWICQKAAKDKRLVGITPAMKEGSDLIRFSQLYPHRYFDVAIAEQHAVTFAGGLACQGLKPVVAIYSTFLQRAYDQVIHDIALQNLDVLYAVDRAGLVGADGATHDGSFDLAFMRCIPNHVIMTPSDENETYHMLEFGYEYNGPAMVRYPRGAGIGAEITGSLDLELGKAKIVKQGSKIAILNFGTLLPLAKQLAEKYHATVIDMRFVKPLDKIMLDKVSQTHEIILTLEENCIAGGAGSAVNEYFVAKDLSNKIIVRNFGLQDKFLNHGTKDLLLAQSKLCVENISKELDKLI</sequence>
<keyword id="KW-0414">Isoprene biosynthesis</keyword>
<keyword id="KW-0460">Magnesium</keyword>
<keyword id="KW-0479">Metal-binding</keyword>
<keyword id="KW-0784">Thiamine biosynthesis</keyword>
<keyword id="KW-0786">Thiamine pyrophosphate</keyword>
<keyword id="KW-0808">Transferase</keyword>
<comment type="function">
    <text evidence="1">Catalyzes the acyloin condensation reaction between C atoms 2 and 3 of pyruvate and glyceraldehyde 3-phosphate to yield 1-deoxy-D-xylulose-5-phosphate (DXP).</text>
</comment>
<comment type="catalytic activity">
    <reaction evidence="1">
        <text>D-glyceraldehyde 3-phosphate + pyruvate + H(+) = 1-deoxy-D-xylulose 5-phosphate + CO2</text>
        <dbReference type="Rhea" id="RHEA:12605"/>
        <dbReference type="ChEBI" id="CHEBI:15361"/>
        <dbReference type="ChEBI" id="CHEBI:15378"/>
        <dbReference type="ChEBI" id="CHEBI:16526"/>
        <dbReference type="ChEBI" id="CHEBI:57792"/>
        <dbReference type="ChEBI" id="CHEBI:59776"/>
        <dbReference type="EC" id="2.2.1.7"/>
    </reaction>
</comment>
<comment type="cofactor">
    <cofactor evidence="1">
        <name>Mg(2+)</name>
        <dbReference type="ChEBI" id="CHEBI:18420"/>
    </cofactor>
    <text evidence="1">Binds 1 Mg(2+) ion per subunit.</text>
</comment>
<comment type="cofactor">
    <cofactor evidence="1">
        <name>thiamine diphosphate</name>
        <dbReference type="ChEBI" id="CHEBI:58937"/>
    </cofactor>
    <text evidence="1">Binds 1 thiamine pyrophosphate per subunit.</text>
</comment>
<comment type="pathway">
    <text evidence="1">Metabolic intermediate biosynthesis; 1-deoxy-D-xylulose 5-phosphate biosynthesis; 1-deoxy-D-xylulose 5-phosphate from D-glyceraldehyde 3-phosphate and pyruvate: step 1/1.</text>
</comment>
<comment type="subunit">
    <text evidence="1">Homodimer.</text>
</comment>
<comment type="similarity">
    <text evidence="1">Belongs to the transketolase family. DXPS subfamily.</text>
</comment>
<protein>
    <recommendedName>
        <fullName evidence="1">1-deoxy-D-xylulose-5-phosphate synthase</fullName>
        <ecNumber evidence="1">2.2.1.7</ecNumber>
    </recommendedName>
    <alternativeName>
        <fullName evidence="1">1-deoxyxylulose-5-phosphate synthase</fullName>
        <shortName evidence="1">DXP synthase</shortName>
        <shortName evidence="1">DXPS</shortName>
    </alternativeName>
</protein>
<accession>A7NCA4</accession>
<reference key="1">
    <citation type="journal article" date="2009" name="PLoS ONE">
        <title>Complete genome sequence of Francisella tularensis subspecies holarctica FTNF002-00.</title>
        <authorList>
            <person name="Barabote R.D."/>
            <person name="Xie G."/>
            <person name="Brettin T.S."/>
            <person name="Hinrichs S.H."/>
            <person name="Fey P.D."/>
            <person name="Jay J.J."/>
            <person name="Engle J.L."/>
            <person name="Godbole S.D."/>
            <person name="Noronha J.M."/>
            <person name="Scheuermann R.H."/>
            <person name="Zhou L.W."/>
            <person name="Lion C."/>
            <person name="Dempsey M.P."/>
        </authorList>
    </citation>
    <scope>NUCLEOTIDE SEQUENCE [LARGE SCALE GENOMIC DNA]</scope>
    <source>
        <strain>FTNF002-00 / FTA</strain>
    </source>
</reference>